<keyword id="KW-0028">Amino-acid biosynthesis</keyword>
<keyword id="KW-0963">Cytoplasm</keyword>
<keyword id="KW-0220">Diaminopimelate biosynthesis</keyword>
<keyword id="KW-0456">Lyase</keyword>
<keyword id="KW-0457">Lysine biosynthesis</keyword>
<keyword id="KW-1185">Reference proteome</keyword>
<keyword id="KW-0704">Schiff base</keyword>
<dbReference type="EC" id="4.3.3.7" evidence="1"/>
<dbReference type="EMBL" id="AM295250">
    <property type="protein sequence ID" value="CAL27947.1"/>
    <property type="molecule type" value="Genomic_DNA"/>
</dbReference>
<dbReference type="RefSeq" id="WP_015900288.1">
    <property type="nucleotide sequence ID" value="NC_012121.1"/>
</dbReference>
<dbReference type="SMR" id="B9DP23"/>
<dbReference type="GeneID" id="93793463"/>
<dbReference type="KEGG" id="sca:SCA_1039"/>
<dbReference type="eggNOG" id="COG0329">
    <property type="taxonomic scope" value="Bacteria"/>
</dbReference>
<dbReference type="HOGENOM" id="CLU_049343_7_0_9"/>
<dbReference type="OrthoDB" id="9782828at2"/>
<dbReference type="BioCyc" id="SCAR396513:SCA_RS05205-MONOMER"/>
<dbReference type="UniPathway" id="UPA00034">
    <property type="reaction ID" value="UER00017"/>
</dbReference>
<dbReference type="Proteomes" id="UP000000444">
    <property type="component" value="Chromosome"/>
</dbReference>
<dbReference type="GO" id="GO:0005829">
    <property type="term" value="C:cytosol"/>
    <property type="evidence" value="ECO:0007669"/>
    <property type="project" value="TreeGrafter"/>
</dbReference>
<dbReference type="GO" id="GO:0008840">
    <property type="term" value="F:4-hydroxy-tetrahydrodipicolinate synthase activity"/>
    <property type="evidence" value="ECO:0007669"/>
    <property type="project" value="UniProtKB-UniRule"/>
</dbReference>
<dbReference type="GO" id="GO:0019877">
    <property type="term" value="P:diaminopimelate biosynthetic process"/>
    <property type="evidence" value="ECO:0007669"/>
    <property type="project" value="UniProtKB-UniRule"/>
</dbReference>
<dbReference type="GO" id="GO:0009089">
    <property type="term" value="P:lysine biosynthetic process via diaminopimelate"/>
    <property type="evidence" value="ECO:0007669"/>
    <property type="project" value="UniProtKB-UniRule"/>
</dbReference>
<dbReference type="CDD" id="cd00950">
    <property type="entry name" value="DHDPS"/>
    <property type="match status" value="1"/>
</dbReference>
<dbReference type="Gene3D" id="3.20.20.70">
    <property type="entry name" value="Aldolase class I"/>
    <property type="match status" value="1"/>
</dbReference>
<dbReference type="HAMAP" id="MF_00418">
    <property type="entry name" value="DapA"/>
    <property type="match status" value="1"/>
</dbReference>
<dbReference type="InterPro" id="IPR013785">
    <property type="entry name" value="Aldolase_TIM"/>
</dbReference>
<dbReference type="InterPro" id="IPR005263">
    <property type="entry name" value="DapA"/>
</dbReference>
<dbReference type="InterPro" id="IPR002220">
    <property type="entry name" value="DapA-like"/>
</dbReference>
<dbReference type="InterPro" id="IPR020625">
    <property type="entry name" value="Schiff_base-form_aldolases_AS"/>
</dbReference>
<dbReference type="NCBIfam" id="TIGR00674">
    <property type="entry name" value="dapA"/>
    <property type="match status" value="1"/>
</dbReference>
<dbReference type="PANTHER" id="PTHR12128:SF66">
    <property type="entry name" value="4-HYDROXY-2-OXOGLUTARATE ALDOLASE, MITOCHONDRIAL"/>
    <property type="match status" value="1"/>
</dbReference>
<dbReference type="PANTHER" id="PTHR12128">
    <property type="entry name" value="DIHYDRODIPICOLINATE SYNTHASE"/>
    <property type="match status" value="1"/>
</dbReference>
<dbReference type="Pfam" id="PF00701">
    <property type="entry name" value="DHDPS"/>
    <property type="match status" value="1"/>
</dbReference>
<dbReference type="PIRSF" id="PIRSF001365">
    <property type="entry name" value="DHDPS"/>
    <property type="match status" value="1"/>
</dbReference>
<dbReference type="PRINTS" id="PR00146">
    <property type="entry name" value="DHPICSNTHASE"/>
</dbReference>
<dbReference type="SMART" id="SM01130">
    <property type="entry name" value="DHDPS"/>
    <property type="match status" value="1"/>
</dbReference>
<dbReference type="SUPFAM" id="SSF51569">
    <property type="entry name" value="Aldolase"/>
    <property type="match status" value="1"/>
</dbReference>
<dbReference type="PROSITE" id="PS00666">
    <property type="entry name" value="DHDPS_2"/>
    <property type="match status" value="1"/>
</dbReference>
<evidence type="ECO:0000255" key="1">
    <source>
        <dbReference type="HAMAP-Rule" id="MF_00418"/>
    </source>
</evidence>
<evidence type="ECO:0000305" key="2"/>
<name>DAPA_STACT</name>
<sequence length="294" mass="32224">MSRLFEGVGVALTTPFTNNEIDYEALEKHVDYLLNNNIQSIVVNGTTAENPTLSDEEKDEVLKAVVKQVDGRVPVIAGTGTNATKKSLEASLRAKEIGADAIMLITPYYNKTSQRGLVAHFTTIADAVGLPVVLYNVPSRTNMTIDVDTMVELAKNPFIVAIKDATNDFDYHNKLKERLDLSDFSLYSGNDDNVVRYFAEGGNGVISVVANAIPGDFQALYEKSKRGEAIDKDFEPISRLLNALSVDVNPIPIKALTAVEGFGNYEVRLPLVTLESSDRKQLEEAYAKYKAGEL</sequence>
<gene>
    <name evidence="1" type="primary">dapA</name>
    <name type="ordered locus">Sca_1039</name>
</gene>
<feature type="chain" id="PRO_1000134877" description="4-hydroxy-tetrahydrodipicolinate synthase">
    <location>
        <begin position="1"/>
        <end position="294"/>
    </location>
</feature>
<feature type="active site" description="Proton donor/acceptor" evidence="1">
    <location>
        <position position="135"/>
    </location>
</feature>
<feature type="active site" description="Schiff-base intermediate with substrate" evidence="1">
    <location>
        <position position="163"/>
    </location>
</feature>
<feature type="binding site" evidence="1">
    <location>
        <position position="47"/>
    </location>
    <ligand>
        <name>pyruvate</name>
        <dbReference type="ChEBI" id="CHEBI:15361"/>
    </ligand>
</feature>
<feature type="binding site" evidence="1">
    <location>
        <position position="206"/>
    </location>
    <ligand>
        <name>pyruvate</name>
        <dbReference type="ChEBI" id="CHEBI:15361"/>
    </ligand>
</feature>
<feature type="site" description="Part of a proton relay during catalysis" evidence="1">
    <location>
        <position position="46"/>
    </location>
</feature>
<feature type="site" description="Part of a proton relay during catalysis" evidence="1">
    <location>
        <position position="109"/>
    </location>
</feature>
<organism>
    <name type="scientific">Staphylococcus carnosus (strain TM300)</name>
    <dbReference type="NCBI Taxonomy" id="396513"/>
    <lineage>
        <taxon>Bacteria</taxon>
        <taxon>Bacillati</taxon>
        <taxon>Bacillota</taxon>
        <taxon>Bacilli</taxon>
        <taxon>Bacillales</taxon>
        <taxon>Staphylococcaceae</taxon>
        <taxon>Staphylococcus</taxon>
    </lineage>
</organism>
<protein>
    <recommendedName>
        <fullName evidence="1">4-hydroxy-tetrahydrodipicolinate synthase</fullName>
        <shortName evidence="1">HTPA synthase</shortName>
        <ecNumber evidence="1">4.3.3.7</ecNumber>
    </recommendedName>
</protein>
<proteinExistence type="inferred from homology"/>
<comment type="function">
    <text evidence="1">Catalyzes the condensation of (S)-aspartate-beta-semialdehyde [(S)-ASA] and pyruvate to 4-hydroxy-tetrahydrodipicolinate (HTPA).</text>
</comment>
<comment type="catalytic activity">
    <reaction evidence="1">
        <text>L-aspartate 4-semialdehyde + pyruvate = (2S,4S)-4-hydroxy-2,3,4,5-tetrahydrodipicolinate + H2O + H(+)</text>
        <dbReference type="Rhea" id="RHEA:34171"/>
        <dbReference type="ChEBI" id="CHEBI:15361"/>
        <dbReference type="ChEBI" id="CHEBI:15377"/>
        <dbReference type="ChEBI" id="CHEBI:15378"/>
        <dbReference type="ChEBI" id="CHEBI:67139"/>
        <dbReference type="ChEBI" id="CHEBI:537519"/>
        <dbReference type="EC" id="4.3.3.7"/>
    </reaction>
</comment>
<comment type="pathway">
    <text evidence="1">Amino-acid biosynthesis; L-lysine biosynthesis via DAP pathway; (S)-tetrahydrodipicolinate from L-aspartate: step 3/4.</text>
</comment>
<comment type="subunit">
    <text evidence="1">Homodimer.</text>
</comment>
<comment type="subcellular location">
    <subcellularLocation>
        <location evidence="1">Cytoplasm</location>
    </subcellularLocation>
</comment>
<comment type="similarity">
    <text evidence="1">Belongs to the DapA family.</text>
</comment>
<comment type="caution">
    <text evidence="2">Was originally thought to be a dihydrodipicolinate synthase (DHDPS), catalyzing the condensation of (S)-aspartate-beta-semialdehyde [(S)-ASA] and pyruvate to dihydrodipicolinate (DHDP). However, it was shown in E.coli that the product of the enzymatic reaction is not dihydrodipicolinate but in fact (4S)-4-hydroxy-2,3,4,5-tetrahydro-(2S)-dipicolinic acid (HTPA), and that the consecutive dehydration reaction leading to DHDP is not spontaneous but catalyzed by DapB.</text>
</comment>
<accession>B9DP23</accession>
<reference key="1">
    <citation type="journal article" date="2009" name="Appl. Environ. Microbiol.">
        <title>Genome analysis of the meat starter culture bacterium Staphylococcus carnosus TM300.</title>
        <authorList>
            <person name="Rosenstein R."/>
            <person name="Nerz C."/>
            <person name="Biswas L."/>
            <person name="Resch A."/>
            <person name="Raddatz G."/>
            <person name="Schuster S.C."/>
            <person name="Goetz F."/>
        </authorList>
    </citation>
    <scope>NUCLEOTIDE SEQUENCE [LARGE SCALE GENOMIC DNA]</scope>
    <source>
        <strain>TM300</strain>
    </source>
</reference>